<protein>
    <recommendedName>
        <fullName>NADH-ubiquinone oxidoreductase chain 5</fullName>
        <ecNumber>7.1.1.2</ecNumber>
    </recommendedName>
    <alternativeName>
        <fullName>NADH dehydrogenase subunit 5</fullName>
    </alternativeName>
</protein>
<feature type="chain" id="PRO_0000118074" description="NADH-ubiquinone oxidoreductase chain 5">
    <location>
        <begin position="1"/>
        <end position="555"/>
    </location>
</feature>
<feature type="transmembrane region" description="Helical" evidence="2">
    <location>
        <begin position="37"/>
        <end position="57"/>
    </location>
</feature>
<feature type="transmembrane region" description="Helical" evidence="2">
    <location>
        <begin position="69"/>
        <end position="89"/>
    </location>
</feature>
<feature type="transmembrane region" description="Helical" evidence="2">
    <location>
        <begin position="90"/>
        <end position="110"/>
    </location>
</feature>
<feature type="transmembrane region" description="Helical" evidence="2">
    <location>
        <begin position="133"/>
        <end position="153"/>
    </location>
</feature>
<feature type="transmembrane region" description="Helical" evidence="2">
    <location>
        <begin position="155"/>
        <end position="175"/>
    </location>
</feature>
<feature type="transmembrane region" description="Helical" evidence="2">
    <location>
        <begin position="197"/>
        <end position="217"/>
    </location>
</feature>
<feature type="transmembrane region" description="Helical" evidence="2">
    <location>
        <begin position="230"/>
        <end position="250"/>
    </location>
</feature>
<feature type="transmembrane region" description="Helical" evidence="2">
    <location>
        <begin position="257"/>
        <end position="275"/>
    </location>
</feature>
<feature type="transmembrane region" description="Helical" evidence="2">
    <location>
        <begin position="287"/>
        <end position="307"/>
    </location>
</feature>
<feature type="transmembrane region" description="Helical" evidence="2">
    <location>
        <begin position="323"/>
        <end position="343"/>
    </location>
</feature>
<feature type="transmembrane region" description="Helical" evidence="2">
    <location>
        <begin position="366"/>
        <end position="388"/>
    </location>
</feature>
<feature type="transmembrane region" description="Helical" evidence="2">
    <location>
        <begin position="406"/>
        <end position="426"/>
    </location>
</feature>
<feature type="transmembrane region" description="Helical" evidence="2">
    <location>
        <begin position="454"/>
        <end position="474"/>
    </location>
</feature>
<feature type="transmembrane region" description="Helical" evidence="2">
    <location>
        <begin position="494"/>
        <end position="516"/>
    </location>
</feature>
<feature type="transmembrane region" description="Helical" evidence="2">
    <location>
        <begin position="534"/>
        <end position="554"/>
    </location>
</feature>
<geneLocation type="mitochondrion"/>
<dbReference type="EC" id="7.1.1.2"/>
<dbReference type="EMBL" id="X74411">
    <property type="protein sequence ID" value="CAE54609.1"/>
    <property type="molecule type" value="Genomic_DNA"/>
</dbReference>
<dbReference type="RefSeq" id="NP_943647.1">
    <property type="nucleotide sequence ID" value="NC_005253.2"/>
</dbReference>
<dbReference type="SMR" id="P48919"/>
<dbReference type="GeneID" id="2657779"/>
<dbReference type="CGD" id="CAL0000145005">
    <property type="gene designation" value="CapafMp15"/>
</dbReference>
<dbReference type="VEuPathDB" id="FungiDB:CapafMp15"/>
<dbReference type="GO" id="GO:0005743">
    <property type="term" value="C:mitochondrial inner membrane"/>
    <property type="evidence" value="ECO:0007669"/>
    <property type="project" value="UniProtKB-SubCell"/>
</dbReference>
<dbReference type="GO" id="GO:0008137">
    <property type="term" value="F:NADH dehydrogenase (ubiquinone) activity"/>
    <property type="evidence" value="ECO:0007669"/>
    <property type="project" value="UniProtKB-EC"/>
</dbReference>
<dbReference type="GO" id="GO:0042773">
    <property type="term" value="P:ATP synthesis coupled electron transport"/>
    <property type="evidence" value="ECO:0007669"/>
    <property type="project" value="InterPro"/>
</dbReference>
<dbReference type="GO" id="GO:0015990">
    <property type="term" value="P:electron transport coupled proton transport"/>
    <property type="evidence" value="ECO:0007669"/>
    <property type="project" value="TreeGrafter"/>
</dbReference>
<dbReference type="InterPro" id="IPR010934">
    <property type="entry name" value="NADH_DH_su5_C"/>
</dbReference>
<dbReference type="InterPro" id="IPR018393">
    <property type="entry name" value="NADHpl_OxRdtase_5_subgr"/>
</dbReference>
<dbReference type="InterPro" id="IPR001750">
    <property type="entry name" value="ND/Mrp_TM"/>
</dbReference>
<dbReference type="InterPro" id="IPR003945">
    <property type="entry name" value="NU5C-like"/>
</dbReference>
<dbReference type="InterPro" id="IPR001516">
    <property type="entry name" value="Proton_antipo_N"/>
</dbReference>
<dbReference type="NCBIfam" id="TIGR01974">
    <property type="entry name" value="NDH_I_L"/>
    <property type="match status" value="1"/>
</dbReference>
<dbReference type="PANTHER" id="PTHR42829">
    <property type="entry name" value="NADH-UBIQUINONE OXIDOREDUCTASE CHAIN 5"/>
    <property type="match status" value="1"/>
</dbReference>
<dbReference type="PANTHER" id="PTHR42829:SF2">
    <property type="entry name" value="NADH-UBIQUINONE OXIDOREDUCTASE CHAIN 5"/>
    <property type="match status" value="1"/>
</dbReference>
<dbReference type="Pfam" id="PF06455">
    <property type="entry name" value="NADH5_C"/>
    <property type="match status" value="1"/>
</dbReference>
<dbReference type="Pfam" id="PF00361">
    <property type="entry name" value="Proton_antipo_M"/>
    <property type="match status" value="1"/>
</dbReference>
<dbReference type="Pfam" id="PF00662">
    <property type="entry name" value="Proton_antipo_N"/>
    <property type="match status" value="1"/>
</dbReference>
<dbReference type="PRINTS" id="PR01434">
    <property type="entry name" value="NADHDHGNASE5"/>
</dbReference>
<comment type="function">
    <text evidence="1">Core subunit of the mitochondrial membrane respiratory chain NADH dehydrogenase (Complex I) that is believed to belong to the minimal assembly required for catalysis. Complex I functions in the transfer of electrons from NADH to the respiratory chain. The immediate electron acceptor for the enzyme is believed to be ubiquinone (By similarity).</text>
</comment>
<comment type="catalytic activity">
    <reaction>
        <text>a ubiquinone + NADH + 5 H(+)(in) = a ubiquinol + NAD(+) + 4 H(+)(out)</text>
        <dbReference type="Rhea" id="RHEA:29091"/>
        <dbReference type="Rhea" id="RHEA-COMP:9565"/>
        <dbReference type="Rhea" id="RHEA-COMP:9566"/>
        <dbReference type="ChEBI" id="CHEBI:15378"/>
        <dbReference type="ChEBI" id="CHEBI:16389"/>
        <dbReference type="ChEBI" id="CHEBI:17976"/>
        <dbReference type="ChEBI" id="CHEBI:57540"/>
        <dbReference type="ChEBI" id="CHEBI:57945"/>
        <dbReference type="EC" id="7.1.1.2"/>
    </reaction>
</comment>
<comment type="subcellular location">
    <subcellularLocation>
        <location evidence="1">Mitochondrion inner membrane</location>
        <topology evidence="1">Multi-pass membrane protein</topology>
    </subcellularLocation>
</comment>
<comment type="similarity">
    <text evidence="3">Belongs to the complex I subunit 5 family.</text>
</comment>
<sequence length="555" mass="62518">MFQYLYYIWEEPISISLGNWLNIGDIIIPYGLSLDSLAMTVMIPVGIVTLCVLLYAIEYMSHDPNRNTFYIILSVFAIFMTILVVSDNYIMMFIGWEFVGVISYLLISFWSTRIAAMKAALSAILLNRMGDTFFMLALGIFLSYFHAVDFDTLSLAAPYTNTLILNILSLLLLLAATAKSAQLGLHAWLLQAMEGPTPVSALLHAATMVCAGVYVLVRSYFILEYAPSLLIGICWLGGVTTLVSGLIAIVTNDIKKVIALSTMSQLSIMVLAIGISSYDLAIYHLYCHAFFKALLFMGAGSVIHSYISETQDMRKYGGLVNYLPFSYTAILIASLSLMAIPGLTGYYSKDIIIESLYGTYTFSGYILYYMAVGSATLTSLYSIRVLYLTFYNNPNSNKATYQHIHENIRMLIPMIILVIYSIFIGFNRDNVIGHYAMSLPANNSFIETEFTLPWYIKLLPLILGLSLSLLLVYIYEYAYKVRPSSIYNYFNNKIYYDQLLNNVIIRKTLIFGGYLNTYIDNGLLKVLGSTGISRALTYINIGIFLNLLYLFFFYR</sequence>
<reference key="1">
    <citation type="journal article" date="1994" name="J. Bacteriol.">
        <title>NADH dehydrogenase subunit genes in the mitochondrial DNA of yeasts.</title>
        <authorList>
            <person name="Nosek J."/>
            <person name="Fukuhara H."/>
        </authorList>
    </citation>
    <scope>NUCLEOTIDE SEQUENCE [GENOMIC DNA]</scope>
    <source>
        <strain>SR23 / CBS 7157</strain>
    </source>
</reference>
<reference key="2">
    <citation type="journal article" date="2004" name="Mol. Genet. Genomics">
        <title>Complete DNA sequence of the linear mitochondrial genome of the pathogenic yeast Candida parapsilosis.</title>
        <authorList>
            <person name="Nosek J."/>
            <person name="Novotna M."/>
            <person name="Hlavatovicova Z."/>
            <person name="Ussery D.W."/>
            <person name="Fajkus J."/>
            <person name="Tomaska L."/>
        </authorList>
    </citation>
    <scope>NUCLEOTIDE SEQUENCE [LARGE SCALE GENOMIC DNA]</scope>
    <source>
        <strain>SR23 / CBS 7157</strain>
    </source>
</reference>
<gene>
    <name type="primary">ND5</name>
    <name type="synonym">NAD5</name>
</gene>
<keyword id="KW-0249">Electron transport</keyword>
<keyword id="KW-0472">Membrane</keyword>
<keyword id="KW-0496">Mitochondrion</keyword>
<keyword id="KW-0999">Mitochondrion inner membrane</keyword>
<keyword id="KW-0520">NAD</keyword>
<keyword id="KW-0679">Respiratory chain</keyword>
<keyword id="KW-1278">Translocase</keyword>
<keyword id="KW-0812">Transmembrane</keyword>
<keyword id="KW-1133">Transmembrane helix</keyword>
<keyword id="KW-0813">Transport</keyword>
<keyword id="KW-0830">Ubiquinone</keyword>
<proteinExistence type="inferred from homology"/>
<name>NU5M_CANPA</name>
<evidence type="ECO:0000250" key="1"/>
<evidence type="ECO:0000255" key="2"/>
<evidence type="ECO:0000305" key="3"/>
<organism>
    <name type="scientific">Candida parapsilosis</name>
    <name type="common">Yeast</name>
    <dbReference type="NCBI Taxonomy" id="5480"/>
    <lineage>
        <taxon>Eukaryota</taxon>
        <taxon>Fungi</taxon>
        <taxon>Dikarya</taxon>
        <taxon>Ascomycota</taxon>
        <taxon>Saccharomycotina</taxon>
        <taxon>Pichiomycetes</taxon>
        <taxon>Debaryomycetaceae</taxon>
        <taxon>Candida/Lodderomyces clade</taxon>
        <taxon>Candida</taxon>
    </lineage>
</organism>
<accession>P48919</accession>